<comment type="function">
    <text evidence="1">Together with its co-chaperonin GroES, plays an essential role in assisting protein folding. The GroEL-GroES system forms a nano-cage that allows encapsulation of the non-native substrate proteins and provides a physical environment optimized to promote and accelerate protein folding.</text>
</comment>
<comment type="catalytic activity">
    <reaction evidence="1">
        <text>ATP + H2O + a folded polypeptide = ADP + phosphate + an unfolded polypeptide.</text>
        <dbReference type="EC" id="5.6.1.7"/>
    </reaction>
</comment>
<comment type="subunit">
    <text evidence="1">Forms a cylinder of 14 subunits composed of two heptameric rings stacked back-to-back. Interacts with the co-chaperonin GroES.</text>
</comment>
<comment type="subcellular location">
    <subcellularLocation>
        <location evidence="1">Cytoplasm</location>
    </subcellularLocation>
</comment>
<comment type="similarity">
    <text evidence="1">Belongs to the chaperonin (HSP60) family.</text>
</comment>
<proteinExistence type="inferred from homology"/>
<name>CH60_ALKOO</name>
<evidence type="ECO:0000255" key="1">
    <source>
        <dbReference type="HAMAP-Rule" id="MF_00600"/>
    </source>
</evidence>
<feature type="chain" id="PRO_1000061251" description="Chaperonin GroEL">
    <location>
        <begin position="1"/>
        <end position="541"/>
    </location>
</feature>
<feature type="binding site" evidence="1">
    <location>
        <begin position="29"/>
        <end position="32"/>
    </location>
    <ligand>
        <name>ATP</name>
        <dbReference type="ChEBI" id="CHEBI:30616"/>
    </ligand>
</feature>
<feature type="binding site" evidence="1">
    <location>
        <begin position="86"/>
        <end position="90"/>
    </location>
    <ligand>
        <name>ATP</name>
        <dbReference type="ChEBI" id="CHEBI:30616"/>
    </ligand>
</feature>
<feature type="binding site" evidence="1">
    <location>
        <position position="413"/>
    </location>
    <ligand>
        <name>ATP</name>
        <dbReference type="ChEBI" id="CHEBI:30616"/>
    </ligand>
</feature>
<feature type="binding site" evidence="1">
    <location>
        <begin position="478"/>
        <end position="480"/>
    </location>
    <ligand>
        <name>ATP</name>
        <dbReference type="ChEBI" id="CHEBI:30616"/>
    </ligand>
</feature>
<feature type="binding site" evidence="1">
    <location>
        <position position="494"/>
    </location>
    <ligand>
        <name>ATP</name>
        <dbReference type="ChEBI" id="CHEBI:30616"/>
    </ligand>
</feature>
<organism>
    <name type="scientific">Alkaliphilus oremlandii (strain OhILAs)</name>
    <name type="common">Clostridium oremlandii (strain OhILAs)</name>
    <dbReference type="NCBI Taxonomy" id="350688"/>
    <lineage>
        <taxon>Bacteria</taxon>
        <taxon>Bacillati</taxon>
        <taxon>Bacillota</taxon>
        <taxon>Clostridia</taxon>
        <taxon>Peptostreptococcales</taxon>
        <taxon>Natronincolaceae</taxon>
        <taxon>Alkaliphilus</taxon>
    </lineage>
</organism>
<gene>
    <name evidence="1" type="primary">groEL</name>
    <name evidence="1" type="synonym">groL</name>
    <name type="ordered locus">Clos_2447</name>
</gene>
<protein>
    <recommendedName>
        <fullName evidence="1">Chaperonin GroEL</fullName>
        <ecNumber evidence="1">5.6.1.7</ecNumber>
    </recommendedName>
    <alternativeName>
        <fullName evidence="1">60 kDa chaperonin</fullName>
    </alternativeName>
    <alternativeName>
        <fullName evidence="1">Chaperonin-60</fullName>
        <shortName evidence="1">Cpn60</shortName>
    </alternativeName>
</protein>
<accession>A8MJJ7</accession>
<sequence length="541" mass="57603">MAKEIKFAEEARRSLEAGVNKLADTVKVTLGPKGRNVIIDKKFGSPLITNDGVTIAREIELEDAYENMGAQLVKEVATKTNDVAGDGTTTATLLAQAIIREGLKNVAAGANPMILKKGIQKAVDVAVEELKNTSQKVEGKEAIAQIGAVSAADEEIGQLIADAMEKVGNDGVITVEESKSMGTTLDVVEGMQFDRGYLSAYMVTDTEKMEAVFNDPYILLTDKKINTVQEILPVLEQIVQQGRKLLIIAEDIEGEALATLVLNKLRGTFECVAVKAPGFGDRRKAMLDDIAVLTGATVISDELGYDLKTATIDMLGTARTVKVDKDNTTIVEGAGDSSAIKDRVNQIKRQIEETTSDFDKEKLQERLAKLSGGVAVIQVGAATETELKERKLRIEDALNATRAGVEEGMVAGGGASLVHVIPAVEALLETTEGDERTGVKIIRRALEEPLRQIAANAGLEGSVIVEKVMSSEKGIGFDALTEKYVNMIEAGIVDPTKVTRSALQNAASVSAMLLTTEGAIVDIKSDEPSMPGGMGGGMPMM</sequence>
<reference key="1">
    <citation type="submission" date="2007-10" db="EMBL/GenBank/DDBJ databases">
        <title>Complete genome of Alkaliphilus oremlandii OhILAs.</title>
        <authorList>
            <person name="Copeland A."/>
            <person name="Lucas S."/>
            <person name="Lapidus A."/>
            <person name="Barry K."/>
            <person name="Detter J.C."/>
            <person name="Glavina del Rio T."/>
            <person name="Hammon N."/>
            <person name="Israni S."/>
            <person name="Dalin E."/>
            <person name="Tice H."/>
            <person name="Pitluck S."/>
            <person name="Chain P."/>
            <person name="Malfatti S."/>
            <person name="Shin M."/>
            <person name="Vergez L."/>
            <person name="Schmutz J."/>
            <person name="Larimer F."/>
            <person name="Land M."/>
            <person name="Hauser L."/>
            <person name="Kyrpides N."/>
            <person name="Mikhailova N."/>
            <person name="Stolz J.F."/>
            <person name="Dawson A."/>
            <person name="Fisher E."/>
            <person name="Crable B."/>
            <person name="Perera E."/>
            <person name="Lisak J."/>
            <person name="Ranganathan M."/>
            <person name="Basu P."/>
            <person name="Richardson P."/>
        </authorList>
    </citation>
    <scope>NUCLEOTIDE SEQUENCE [LARGE SCALE GENOMIC DNA]</scope>
    <source>
        <strain>OhILAs</strain>
    </source>
</reference>
<dbReference type="EC" id="5.6.1.7" evidence="1"/>
<dbReference type="EMBL" id="CP000853">
    <property type="protein sequence ID" value="ABW19979.1"/>
    <property type="molecule type" value="Genomic_DNA"/>
</dbReference>
<dbReference type="RefSeq" id="WP_012160286.1">
    <property type="nucleotide sequence ID" value="NC_009922.1"/>
</dbReference>
<dbReference type="SMR" id="A8MJJ7"/>
<dbReference type="STRING" id="350688.Clos_2447"/>
<dbReference type="KEGG" id="aoe:Clos_2447"/>
<dbReference type="eggNOG" id="COG0459">
    <property type="taxonomic scope" value="Bacteria"/>
</dbReference>
<dbReference type="HOGENOM" id="CLU_016503_3_0_9"/>
<dbReference type="OrthoDB" id="9766614at2"/>
<dbReference type="Proteomes" id="UP000000269">
    <property type="component" value="Chromosome"/>
</dbReference>
<dbReference type="GO" id="GO:0005737">
    <property type="term" value="C:cytoplasm"/>
    <property type="evidence" value="ECO:0007669"/>
    <property type="project" value="UniProtKB-SubCell"/>
</dbReference>
<dbReference type="GO" id="GO:0005524">
    <property type="term" value="F:ATP binding"/>
    <property type="evidence" value="ECO:0007669"/>
    <property type="project" value="UniProtKB-UniRule"/>
</dbReference>
<dbReference type="GO" id="GO:0140662">
    <property type="term" value="F:ATP-dependent protein folding chaperone"/>
    <property type="evidence" value="ECO:0007669"/>
    <property type="project" value="InterPro"/>
</dbReference>
<dbReference type="GO" id="GO:0016853">
    <property type="term" value="F:isomerase activity"/>
    <property type="evidence" value="ECO:0007669"/>
    <property type="project" value="UniProtKB-KW"/>
</dbReference>
<dbReference type="GO" id="GO:0051082">
    <property type="term" value="F:unfolded protein binding"/>
    <property type="evidence" value="ECO:0007669"/>
    <property type="project" value="UniProtKB-UniRule"/>
</dbReference>
<dbReference type="GO" id="GO:0042026">
    <property type="term" value="P:protein refolding"/>
    <property type="evidence" value="ECO:0007669"/>
    <property type="project" value="UniProtKB-UniRule"/>
</dbReference>
<dbReference type="CDD" id="cd03344">
    <property type="entry name" value="GroEL"/>
    <property type="match status" value="1"/>
</dbReference>
<dbReference type="FunFam" id="1.10.560.10:FF:000001">
    <property type="entry name" value="60 kDa chaperonin"/>
    <property type="match status" value="1"/>
</dbReference>
<dbReference type="FunFam" id="3.50.7.10:FF:000001">
    <property type="entry name" value="60 kDa chaperonin"/>
    <property type="match status" value="1"/>
</dbReference>
<dbReference type="Gene3D" id="3.50.7.10">
    <property type="entry name" value="GroEL"/>
    <property type="match status" value="1"/>
</dbReference>
<dbReference type="Gene3D" id="1.10.560.10">
    <property type="entry name" value="GroEL-like equatorial domain"/>
    <property type="match status" value="1"/>
</dbReference>
<dbReference type="Gene3D" id="3.30.260.10">
    <property type="entry name" value="TCP-1-like chaperonin intermediate domain"/>
    <property type="match status" value="1"/>
</dbReference>
<dbReference type="HAMAP" id="MF_00600">
    <property type="entry name" value="CH60"/>
    <property type="match status" value="1"/>
</dbReference>
<dbReference type="InterPro" id="IPR001844">
    <property type="entry name" value="Cpn60/GroEL"/>
</dbReference>
<dbReference type="InterPro" id="IPR002423">
    <property type="entry name" value="Cpn60/GroEL/TCP-1"/>
</dbReference>
<dbReference type="InterPro" id="IPR027409">
    <property type="entry name" value="GroEL-like_apical_dom_sf"/>
</dbReference>
<dbReference type="InterPro" id="IPR027413">
    <property type="entry name" value="GROEL-like_equatorial_sf"/>
</dbReference>
<dbReference type="InterPro" id="IPR027410">
    <property type="entry name" value="TCP-1-like_intermed_sf"/>
</dbReference>
<dbReference type="NCBIfam" id="TIGR02348">
    <property type="entry name" value="GroEL"/>
    <property type="match status" value="1"/>
</dbReference>
<dbReference type="NCBIfam" id="NF000592">
    <property type="entry name" value="PRK00013.1"/>
    <property type="match status" value="1"/>
</dbReference>
<dbReference type="NCBIfam" id="NF009487">
    <property type="entry name" value="PRK12849.1"/>
    <property type="match status" value="1"/>
</dbReference>
<dbReference type="NCBIfam" id="NF009488">
    <property type="entry name" value="PRK12850.1"/>
    <property type="match status" value="1"/>
</dbReference>
<dbReference type="NCBIfam" id="NF009489">
    <property type="entry name" value="PRK12851.1"/>
    <property type="match status" value="1"/>
</dbReference>
<dbReference type="PANTHER" id="PTHR45633">
    <property type="entry name" value="60 KDA HEAT SHOCK PROTEIN, MITOCHONDRIAL"/>
    <property type="match status" value="1"/>
</dbReference>
<dbReference type="Pfam" id="PF00118">
    <property type="entry name" value="Cpn60_TCP1"/>
    <property type="match status" value="1"/>
</dbReference>
<dbReference type="PRINTS" id="PR00298">
    <property type="entry name" value="CHAPERONIN60"/>
</dbReference>
<dbReference type="SUPFAM" id="SSF52029">
    <property type="entry name" value="GroEL apical domain-like"/>
    <property type="match status" value="1"/>
</dbReference>
<dbReference type="SUPFAM" id="SSF48592">
    <property type="entry name" value="GroEL equatorial domain-like"/>
    <property type="match status" value="1"/>
</dbReference>
<dbReference type="SUPFAM" id="SSF54849">
    <property type="entry name" value="GroEL-intermediate domain like"/>
    <property type="match status" value="1"/>
</dbReference>
<keyword id="KW-0067">ATP-binding</keyword>
<keyword id="KW-0143">Chaperone</keyword>
<keyword id="KW-0963">Cytoplasm</keyword>
<keyword id="KW-0413">Isomerase</keyword>
<keyword id="KW-0547">Nucleotide-binding</keyword>
<keyword id="KW-1185">Reference proteome</keyword>